<sequence length="435" mass="49370">MKPLVALVGRPNVGKSTLFNRLSRSKSAITDSTPGVTRDRHIASAEWQGRKFMVMDTGGYCHDKDSLNRAMMEQTLAAIAEADVILFMVDVRSGLAYLDLDMSRMLKKNFRDKPVYLVVNKVETRQLAFEGEEFRRTGLTEPWFISAREGNGVADLLDEVVASFPDETTEEEDTAIKLAIIGRPNVGKSSFVNALLGTNRHIVSDIPGTTRDAIDSRLKRNGKEVLLIDTAGLRKRTKIDRGIEFYSSVRTDKSIERCDVALLLIDAEQGLEKQDIKIIQMAAEKRKGIVILVNKWDLIEKETNTSKQYSDRIYDQIGNLSWIPVLFISALTKKNLYRAIDTALETGQNRQKKISTSELNRFLQQVLSELPPSTKSGRELKIKYVTQIGAHYPVFAFFCNNPDLVLSNYKRFLEKRLRQTFDFTGVPVSFRYRKK</sequence>
<keyword id="KW-0342">GTP-binding</keyword>
<keyword id="KW-0547">Nucleotide-binding</keyword>
<keyword id="KW-0677">Repeat</keyword>
<keyword id="KW-0690">Ribosome biogenesis</keyword>
<name>DER_CHLPB</name>
<feature type="chain" id="PRO_1000099103" description="GTPase Der">
    <location>
        <begin position="1"/>
        <end position="435"/>
    </location>
</feature>
<feature type="domain" description="EngA-type G 1">
    <location>
        <begin position="3"/>
        <end position="168"/>
    </location>
</feature>
<feature type="domain" description="EngA-type G 2">
    <location>
        <begin position="176"/>
        <end position="351"/>
    </location>
</feature>
<feature type="domain" description="KH-like" evidence="1">
    <location>
        <begin position="352"/>
        <end position="435"/>
    </location>
</feature>
<feature type="binding site" evidence="1">
    <location>
        <begin position="9"/>
        <end position="16"/>
    </location>
    <ligand>
        <name>GTP</name>
        <dbReference type="ChEBI" id="CHEBI:37565"/>
        <label>1</label>
    </ligand>
</feature>
<feature type="binding site" evidence="1">
    <location>
        <begin position="56"/>
        <end position="60"/>
    </location>
    <ligand>
        <name>GTP</name>
        <dbReference type="ChEBI" id="CHEBI:37565"/>
        <label>1</label>
    </ligand>
</feature>
<feature type="binding site" evidence="1">
    <location>
        <begin position="120"/>
        <end position="123"/>
    </location>
    <ligand>
        <name>GTP</name>
        <dbReference type="ChEBI" id="CHEBI:37565"/>
        <label>1</label>
    </ligand>
</feature>
<feature type="binding site" evidence="1">
    <location>
        <begin position="182"/>
        <end position="189"/>
    </location>
    <ligand>
        <name>GTP</name>
        <dbReference type="ChEBI" id="CHEBI:37565"/>
        <label>2</label>
    </ligand>
</feature>
<feature type="binding site" evidence="1">
    <location>
        <begin position="229"/>
        <end position="233"/>
    </location>
    <ligand>
        <name>GTP</name>
        <dbReference type="ChEBI" id="CHEBI:37565"/>
        <label>2</label>
    </ligand>
</feature>
<feature type="binding site" evidence="1">
    <location>
        <begin position="294"/>
        <end position="297"/>
    </location>
    <ligand>
        <name>GTP</name>
        <dbReference type="ChEBI" id="CHEBI:37565"/>
        <label>2</label>
    </ligand>
</feature>
<organism>
    <name type="scientific">Chlorobium phaeobacteroides (strain BS1)</name>
    <dbReference type="NCBI Taxonomy" id="331678"/>
    <lineage>
        <taxon>Bacteria</taxon>
        <taxon>Pseudomonadati</taxon>
        <taxon>Chlorobiota</taxon>
        <taxon>Chlorobiia</taxon>
        <taxon>Chlorobiales</taxon>
        <taxon>Chlorobiaceae</taxon>
        <taxon>Chlorobium/Pelodictyon group</taxon>
        <taxon>Chlorobium</taxon>
    </lineage>
</organism>
<proteinExistence type="inferred from homology"/>
<gene>
    <name evidence="1" type="primary">der</name>
    <name type="synonym">engA</name>
    <name type="ordered locus">Cphamn1_2016</name>
</gene>
<protein>
    <recommendedName>
        <fullName evidence="1">GTPase Der</fullName>
    </recommendedName>
    <alternativeName>
        <fullName evidence="1">GTP-binding protein EngA</fullName>
    </alternativeName>
</protein>
<accession>B3EMI7</accession>
<evidence type="ECO:0000255" key="1">
    <source>
        <dbReference type="HAMAP-Rule" id="MF_00195"/>
    </source>
</evidence>
<dbReference type="EMBL" id="CP001101">
    <property type="protein sequence ID" value="ACE04926.1"/>
    <property type="molecule type" value="Genomic_DNA"/>
</dbReference>
<dbReference type="SMR" id="B3EMI7"/>
<dbReference type="STRING" id="331678.Cphamn1_2016"/>
<dbReference type="KEGG" id="cpb:Cphamn1_2016"/>
<dbReference type="eggNOG" id="COG1160">
    <property type="taxonomic scope" value="Bacteria"/>
</dbReference>
<dbReference type="HOGENOM" id="CLU_016077_6_2_10"/>
<dbReference type="OrthoDB" id="9805918at2"/>
<dbReference type="GO" id="GO:0005525">
    <property type="term" value="F:GTP binding"/>
    <property type="evidence" value="ECO:0007669"/>
    <property type="project" value="UniProtKB-UniRule"/>
</dbReference>
<dbReference type="GO" id="GO:0043022">
    <property type="term" value="F:ribosome binding"/>
    <property type="evidence" value="ECO:0007669"/>
    <property type="project" value="TreeGrafter"/>
</dbReference>
<dbReference type="GO" id="GO:0042254">
    <property type="term" value="P:ribosome biogenesis"/>
    <property type="evidence" value="ECO:0007669"/>
    <property type="project" value="UniProtKB-KW"/>
</dbReference>
<dbReference type="CDD" id="cd01894">
    <property type="entry name" value="EngA1"/>
    <property type="match status" value="1"/>
</dbReference>
<dbReference type="CDD" id="cd01895">
    <property type="entry name" value="EngA2"/>
    <property type="match status" value="1"/>
</dbReference>
<dbReference type="FunFam" id="3.30.300.20:FF:000004">
    <property type="entry name" value="GTPase Der"/>
    <property type="match status" value="1"/>
</dbReference>
<dbReference type="FunFam" id="3.40.50.300:FF:000040">
    <property type="entry name" value="GTPase Der"/>
    <property type="match status" value="1"/>
</dbReference>
<dbReference type="Gene3D" id="3.30.300.20">
    <property type="match status" value="1"/>
</dbReference>
<dbReference type="Gene3D" id="3.40.50.300">
    <property type="entry name" value="P-loop containing nucleotide triphosphate hydrolases"/>
    <property type="match status" value="2"/>
</dbReference>
<dbReference type="HAMAP" id="MF_00195">
    <property type="entry name" value="GTPase_Der"/>
    <property type="match status" value="1"/>
</dbReference>
<dbReference type="InterPro" id="IPR031166">
    <property type="entry name" value="G_ENGA"/>
</dbReference>
<dbReference type="InterPro" id="IPR006073">
    <property type="entry name" value="GTP-bd"/>
</dbReference>
<dbReference type="InterPro" id="IPR016484">
    <property type="entry name" value="GTPase_Der"/>
</dbReference>
<dbReference type="InterPro" id="IPR032859">
    <property type="entry name" value="KH_dom-like"/>
</dbReference>
<dbReference type="InterPro" id="IPR015946">
    <property type="entry name" value="KH_dom-like_a/b"/>
</dbReference>
<dbReference type="InterPro" id="IPR027417">
    <property type="entry name" value="P-loop_NTPase"/>
</dbReference>
<dbReference type="InterPro" id="IPR005225">
    <property type="entry name" value="Small_GTP-bd"/>
</dbReference>
<dbReference type="NCBIfam" id="TIGR03594">
    <property type="entry name" value="GTPase_EngA"/>
    <property type="match status" value="1"/>
</dbReference>
<dbReference type="NCBIfam" id="TIGR00231">
    <property type="entry name" value="small_GTP"/>
    <property type="match status" value="2"/>
</dbReference>
<dbReference type="PANTHER" id="PTHR43834">
    <property type="entry name" value="GTPASE DER"/>
    <property type="match status" value="1"/>
</dbReference>
<dbReference type="PANTHER" id="PTHR43834:SF6">
    <property type="entry name" value="GTPASE DER"/>
    <property type="match status" value="1"/>
</dbReference>
<dbReference type="Pfam" id="PF14714">
    <property type="entry name" value="KH_dom-like"/>
    <property type="match status" value="1"/>
</dbReference>
<dbReference type="Pfam" id="PF01926">
    <property type="entry name" value="MMR_HSR1"/>
    <property type="match status" value="2"/>
</dbReference>
<dbReference type="PIRSF" id="PIRSF006485">
    <property type="entry name" value="GTP-binding_EngA"/>
    <property type="match status" value="1"/>
</dbReference>
<dbReference type="PRINTS" id="PR00326">
    <property type="entry name" value="GTP1OBG"/>
</dbReference>
<dbReference type="SUPFAM" id="SSF52540">
    <property type="entry name" value="P-loop containing nucleoside triphosphate hydrolases"/>
    <property type="match status" value="2"/>
</dbReference>
<dbReference type="PROSITE" id="PS51712">
    <property type="entry name" value="G_ENGA"/>
    <property type="match status" value="2"/>
</dbReference>
<reference key="1">
    <citation type="submission" date="2008-06" db="EMBL/GenBank/DDBJ databases">
        <title>Complete sequence of Chlorobium phaeobacteroides BS1.</title>
        <authorList>
            <consortium name="US DOE Joint Genome Institute"/>
            <person name="Lucas S."/>
            <person name="Copeland A."/>
            <person name="Lapidus A."/>
            <person name="Glavina del Rio T."/>
            <person name="Dalin E."/>
            <person name="Tice H."/>
            <person name="Bruce D."/>
            <person name="Goodwin L."/>
            <person name="Pitluck S."/>
            <person name="Schmutz J."/>
            <person name="Larimer F."/>
            <person name="Land M."/>
            <person name="Hauser L."/>
            <person name="Kyrpides N."/>
            <person name="Ovchinnikova G."/>
            <person name="Li T."/>
            <person name="Liu Z."/>
            <person name="Zhao F."/>
            <person name="Overmann J."/>
            <person name="Bryant D.A."/>
            <person name="Richardson P."/>
        </authorList>
    </citation>
    <scope>NUCLEOTIDE SEQUENCE [LARGE SCALE GENOMIC DNA]</scope>
    <source>
        <strain>BS1</strain>
    </source>
</reference>
<comment type="function">
    <text evidence="1">GTPase that plays an essential role in the late steps of ribosome biogenesis.</text>
</comment>
<comment type="subunit">
    <text evidence="1">Associates with the 50S ribosomal subunit.</text>
</comment>
<comment type="similarity">
    <text evidence="1">Belongs to the TRAFAC class TrmE-Era-EngA-EngB-Septin-like GTPase superfamily. EngA (Der) GTPase family.</text>
</comment>